<dbReference type="EMBL" id="AL732356">
    <property type="protein sequence ID" value="CAH67705.1"/>
    <property type="molecule type" value="Genomic_DNA"/>
</dbReference>
<dbReference type="EMBL" id="CM000129">
    <property type="status" value="NOT_ANNOTATED_CDS"/>
    <property type="molecule type" value="Genomic_DNA"/>
</dbReference>
<dbReference type="SMR" id="Q258Y5"/>
<dbReference type="STRING" id="39946.Q258Y5"/>
<dbReference type="Proteomes" id="UP000007015">
    <property type="component" value="Chromosome 4"/>
</dbReference>
<dbReference type="GO" id="GO:0005634">
    <property type="term" value="C:nucleus"/>
    <property type="evidence" value="ECO:0007669"/>
    <property type="project" value="UniProtKB-SubCell"/>
</dbReference>
<dbReference type="GO" id="GO:0003677">
    <property type="term" value="F:DNA binding"/>
    <property type="evidence" value="ECO:0007669"/>
    <property type="project" value="UniProtKB-KW"/>
</dbReference>
<dbReference type="GO" id="GO:0009734">
    <property type="term" value="P:auxin-activated signaling pathway"/>
    <property type="evidence" value="ECO:0007669"/>
    <property type="project" value="UniProtKB-KW"/>
</dbReference>
<dbReference type="GO" id="GO:0006355">
    <property type="term" value="P:regulation of DNA-templated transcription"/>
    <property type="evidence" value="ECO:0007669"/>
    <property type="project" value="InterPro"/>
</dbReference>
<dbReference type="CDD" id="cd10017">
    <property type="entry name" value="B3_DNA"/>
    <property type="match status" value="1"/>
</dbReference>
<dbReference type="FunFam" id="2.30.30.1040:FF:000001">
    <property type="entry name" value="Auxin response factor"/>
    <property type="match status" value="1"/>
</dbReference>
<dbReference type="FunFam" id="2.40.330.10:FF:000001">
    <property type="entry name" value="Auxin response factor"/>
    <property type="match status" value="1"/>
</dbReference>
<dbReference type="FunFam" id="3.10.20.90:FF:000047">
    <property type="entry name" value="Auxin response factor"/>
    <property type="match status" value="1"/>
</dbReference>
<dbReference type="Gene3D" id="2.30.30.1040">
    <property type="match status" value="1"/>
</dbReference>
<dbReference type="Gene3D" id="2.40.330.10">
    <property type="entry name" value="DNA-binding pseudobarrel domain"/>
    <property type="match status" value="1"/>
</dbReference>
<dbReference type="Gene3D" id="3.10.20.90">
    <property type="entry name" value="Phosphatidylinositol 3-kinase Catalytic Subunit, Chain A, domain 1"/>
    <property type="match status" value="1"/>
</dbReference>
<dbReference type="InterPro" id="IPR010525">
    <property type="entry name" value="ARF_dom"/>
</dbReference>
<dbReference type="InterPro" id="IPR044835">
    <property type="entry name" value="ARF_plant"/>
</dbReference>
<dbReference type="InterPro" id="IPR033389">
    <property type="entry name" value="AUX/IAA_dom"/>
</dbReference>
<dbReference type="InterPro" id="IPR003340">
    <property type="entry name" value="B3_DNA-bd"/>
</dbReference>
<dbReference type="InterPro" id="IPR015300">
    <property type="entry name" value="DNA-bd_pseudobarrel_sf"/>
</dbReference>
<dbReference type="InterPro" id="IPR053793">
    <property type="entry name" value="PB1-like"/>
</dbReference>
<dbReference type="PANTHER" id="PTHR31384:SF185">
    <property type="entry name" value="AUXIN RESPONSE FACTOR 12"/>
    <property type="match status" value="1"/>
</dbReference>
<dbReference type="PANTHER" id="PTHR31384">
    <property type="entry name" value="AUXIN RESPONSE FACTOR 4-RELATED"/>
    <property type="match status" value="1"/>
</dbReference>
<dbReference type="Pfam" id="PF06507">
    <property type="entry name" value="ARF_AD"/>
    <property type="match status" value="1"/>
</dbReference>
<dbReference type="Pfam" id="PF02309">
    <property type="entry name" value="AUX_IAA"/>
    <property type="match status" value="1"/>
</dbReference>
<dbReference type="Pfam" id="PF02362">
    <property type="entry name" value="B3"/>
    <property type="match status" value="1"/>
</dbReference>
<dbReference type="SMART" id="SM01019">
    <property type="entry name" value="B3"/>
    <property type="match status" value="1"/>
</dbReference>
<dbReference type="SUPFAM" id="SSF54277">
    <property type="entry name" value="CAD &amp; PB1 domains"/>
    <property type="match status" value="1"/>
</dbReference>
<dbReference type="SUPFAM" id="SSF101936">
    <property type="entry name" value="DNA-binding pseudobarrel domain"/>
    <property type="match status" value="1"/>
</dbReference>
<dbReference type="PROSITE" id="PS50863">
    <property type="entry name" value="B3"/>
    <property type="match status" value="1"/>
</dbReference>
<dbReference type="PROSITE" id="PS51745">
    <property type="entry name" value="PB1"/>
    <property type="match status" value="1"/>
</dbReference>
<reference key="1">
    <citation type="journal article" date="2002" name="Nature">
        <title>Sequence and analysis of rice chromosome 4.</title>
        <authorList>
            <person name="Feng Q."/>
            <person name="Zhang Y."/>
            <person name="Hao P."/>
            <person name="Wang S."/>
            <person name="Fu G."/>
            <person name="Huang Y."/>
            <person name="Li Y."/>
            <person name="Zhu J."/>
            <person name="Liu Y."/>
            <person name="Hu X."/>
            <person name="Jia P."/>
            <person name="Zhang Y."/>
            <person name="Zhao Q."/>
            <person name="Ying K."/>
            <person name="Yu S."/>
            <person name="Tang Y."/>
            <person name="Weng Q."/>
            <person name="Zhang L."/>
            <person name="Lu Y."/>
            <person name="Mu J."/>
            <person name="Lu Y."/>
            <person name="Zhang L.S."/>
            <person name="Yu Z."/>
            <person name="Fan D."/>
            <person name="Liu X."/>
            <person name="Lu T."/>
            <person name="Li C."/>
            <person name="Wu Y."/>
            <person name="Sun T."/>
            <person name="Lei H."/>
            <person name="Li T."/>
            <person name="Hu H."/>
            <person name="Guan J."/>
            <person name="Wu M."/>
            <person name="Zhang R."/>
            <person name="Zhou B."/>
            <person name="Chen Z."/>
            <person name="Chen L."/>
            <person name="Jin Z."/>
            <person name="Wang R."/>
            <person name="Yin H."/>
            <person name="Cai Z."/>
            <person name="Ren S."/>
            <person name="Lv G."/>
            <person name="Gu W."/>
            <person name="Zhu G."/>
            <person name="Tu Y."/>
            <person name="Jia J."/>
            <person name="Zhang Y."/>
            <person name="Chen J."/>
            <person name="Kang H."/>
            <person name="Chen X."/>
            <person name="Shao C."/>
            <person name="Sun Y."/>
            <person name="Hu Q."/>
            <person name="Zhang X."/>
            <person name="Zhang W."/>
            <person name="Wang L."/>
            <person name="Ding C."/>
            <person name="Sheng H."/>
            <person name="Gu J."/>
            <person name="Chen S."/>
            <person name="Ni L."/>
            <person name="Zhu F."/>
            <person name="Chen W."/>
            <person name="Lan L."/>
            <person name="Lai Y."/>
            <person name="Cheng Z."/>
            <person name="Gu M."/>
            <person name="Jiang J."/>
            <person name="Li J."/>
            <person name="Hong G."/>
            <person name="Xue Y."/>
            <person name="Han B."/>
        </authorList>
    </citation>
    <scope>NUCLEOTIDE SEQUENCE [LARGE SCALE GENOMIC DNA]</scope>
    <source>
        <strain>cv. Guang-Lu-Ai No.4</strain>
    </source>
</reference>
<reference key="2">
    <citation type="journal article" date="2005" name="PLoS Biol.">
        <title>The genomes of Oryza sativa: a history of duplications.</title>
        <authorList>
            <person name="Yu J."/>
            <person name="Wang J."/>
            <person name="Lin W."/>
            <person name="Li S."/>
            <person name="Li H."/>
            <person name="Zhou J."/>
            <person name="Ni P."/>
            <person name="Dong W."/>
            <person name="Hu S."/>
            <person name="Zeng C."/>
            <person name="Zhang J."/>
            <person name="Zhang Y."/>
            <person name="Li R."/>
            <person name="Xu Z."/>
            <person name="Li S."/>
            <person name="Li X."/>
            <person name="Zheng H."/>
            <person name="Cong L."/>
            <person name="Lin L."/>
            <person name="Yin J."/>
            <person name="Geng J."/>
            <person name="Li G."/>
            <person name="Shi J."/>
            <person name="Liu J."/>
            <person name="Lv H."/>
            <person name="Li J."/>
            <person name="Wang J."/>
            <person name="Deng Y."/>
            <person name="Ran L."/>
            <person name="Shi X."/>
            <person name="Wang X."/>
            <person name="Wu Q."/>
            <person name="Li C."/>
            <person name="Ren X."/>
            <person name="Wang J."/>
            <person name="Wang X."/>
            <person name="Li D."/>
            <person name="Liu D."/>
            <person name="Zhang X."/>
            <person name="Ji Z."/>
            <person name="Zhao W."/>
            <person name="Sun Y."/>
            <person name="Zhang Z."/>
            <person name="Bao J."/>
            <person name="Han Y."/>
            <person name="Dong L."/>
            <person name="Ji J."/>
            <person name="Chen P."/>
            <person name="Wu S."/>
            <person name="Liu J."/>
            <person name="Xiao Y."/>
            <person name="Bu D."/>
            <person name="Tan J."/>
            <person name="Yang L."/>
            <person name="Ye C."/>
            <person name="Zhang J."/>
            <person name="Xu J."/>
            <person name="Zhou Y."/>
            <person name="Yu Y."/>
            <person name="Zhang B."/>
            <person name="Zhuang S."/>
            <person name="Wei H."/>
            <person name="Liu B."/>
            <person name="Lei M."/>
            <person name="Yu H."/>
            <person name="Li Y."/>
            <person name="Xu H."/>
            <person name="Wei S."/>
            <person name="He X."/>
            <person name="Fang L."/>
            <person name="Zhang Z."/>
            <person name="Zhang Y."/>
            <person name="Huang X."/>
            <person name="Su Z."/>
            <person name="Tong W."/>
            <person name="Li J."/>
            <person name="Tong Z."/>
            <person name="Li S."/>
            <person name="Ye J."/>
            <person name="Wang L."/>
            <person name="Fang L."/>
            <person name="Lei T."/>
            <person name="Chen C.-S."/>
            <person name="Chen H.-C."/>
            <person name="Xu Z."/>
            <person name="Li H."/>
            <person name="Huang H."/>
            <person name="Zhang F."/>
            <person name="Xu H."/>
            <person name="Li N."/>
            <person name="Zhao C."/>
            <person name="Li S."/>
            <person name="Dong L."/>
            <person name="Huang Y."/>
            <person name="Li L."/>
            <person name="Xi Y."/>
            <person name="Qi Q."/>
            <person name="Li W."/>
            <person name="Zhang B."/>
            <person name="Hu W."/>
            <person name="Zhang Y."/>
            <person name="Tian X."/>
            <person name="Jiao Y."/>
            <person name="Liang X."/>
            <person name="Jin J."/>
            <person name="Gao L."/>
            <person name="Zheng W."/>
            <person name="Hao B."/>
            <person name="Liu S.-M."/>
            <person name="Wang W."/>
            <person name="Yuan L."/>
            <person name="Cao M."/>
            <person name="McDermott J."/>
            <person name="Samudrala R."/>
            <person name="Wang J."/>
            <person name="Wong G.K.-S."/>
            <person name="Yang H."/>
        </authorList>
    </citation>
    <scope>NUCLEOTIDE SEQUENCE [LARGE SCALE GENOMIC DNA]</scope>
    <source>
        <strain>cv. 93-11</strain>
    </source>
</reference>
<reference key="3">
    <citation type="journal article" date="2007" name="Gene">
        <title>Genome-wide analysis of the auxin response factors (ARF) gene family in rice (Oryza sativa).</title>
        <authorList>
            <person name="Wang D."/>
            <person name="Pei K."/>
            <person name="Fu Y."/>
            <person name="Sun Z."/>
            <person name="Li S."/>
            <person name="Liu H."/>
            <person name="Tang K."/>
            <person name="Han B."/>
            <person name="Tao Y."/>
        </authorList>
    </citation>
    <scope>GENE FAMILY</scope>
    <scope>NOMENCLATURE</scope>
</reference>
<protein>
    <recommendedName>
        <fullName>Auxin response factor 12</fullName>
    </recommendedName>
    <alternativeName>
        <fullName>OsARF8</fullName>
    </alternativeName>
</protein>
<organism>
    <name type="scientific">Oryza sativa subsp. indica</name>
    <name type="common">Rice</name>
    <dbReference type="NCBI Taxonomy" id="39946"/>
    <lineage>
        <taxon>Eukaryota</taxon>
        <taxon>Viridiplantae</taxon>
        <taxon>Streptophyta</taxon>
        <taxon>Embryophyta</taxon>
        <taxon>Tracheophyta</taxon>
        <taxon>Spermatophyta</taxon>
        <taxon>Magnoliopsida</taxon>
        <taxon>Liliopsida</taxon>
        <taxon>Poales</taxon>
        <taxon>Poaceae</taxon>
        <taxon>BOP clade</taxon>
        <taxon>Oryzoideae</taxon>
        <taxon>Oryzeae</taxon>
        <taxon>Oryzinae</taxon>
        <taxon>Oryza</taxon>
        <taxon>Oryza sativa</taxon>
    </lineage>
</organism>
<accession>Q258Y5</accession>
<accession>A2XYU3</accession>
<name>ARFL_ORYSI</name>
<keyword id="KW-0927">Auxin signaling pathway</keyword>
<keyword id="KW-0238">DNA-binding</keyword>
<keyword id="KW-0539">Nucleus</keyword>
<keyword id="KW-1185">Reference proteome</keyword>
<keyword id="KW-0804">Transcription</keyword>
<keyword id="KW-0805">Transcription regulation</keyword>
<proteinExistence type="inferred from homology"/>
<evidence type="ECO:0000250" key="1"/>
<evidence type="ECO:0000255" key="2">
    <source>
        <dbReference type="PROSITE-ProRule" id="PRU00326"/>
    </source>
</evidence>
<evidence type="ECO:0000255" key="3">
    <source>
        <dbReference type="PROSITE-ProRule" id="PRU01081"/>
    </source>
</evidence>
<evidence type="ECO:0000256" key="4">
    <source>
        <dbReference type="SAM" id="MobiDB-lite"/>
    </source>
</evidence>
<evidence type="ECO:0000305" key="5"/>
<sequence>MSSSSAASIGPPQPPPPPAPPEEEKKCLNSELWHACAGPLVCLPTVGTRVVYFPQGHSEQVAASTNKEVEGHIPNYPNLPAQLICQLHDVTMHADVETDEVYAQMTLQPLNPQEQNDAYLPAEMGIMSKQPTNYFCKTLTASDTSTHGGFSVPRRAAERVFPPLDFTQQPPAQELIARDIHDIEWKFRHIFRGQPKRHLLTTGWSVFVSAKRLVAGDSVLFIWNEKNQLLLGIRRASRPQTVMPSSVLSSDSMHIGLLAAAAHAAATNSRFTIFYNPRASPSEFVIPLSKYIKAVFHTRISVGMRFRMLFETEESSVRRYMGTITEVSDADPVRWPSSYWRSVKVGWDESTAGERPPRVSLWEIEPLTTFPMYPSLFPLRVKHPWYSGVASLHDDSNALMWLRGVAGEGGFQSLNFQSPGIGSWGQQRLHPSLLSSDHDQYQAVVAAAAASQSGGYLKQQFLHLQQPMQSPQEHCNLNPLLQQQILQQASQQQIINPDAQNIQTMLSPSAIQQQLQQLQQMQQVQNDQKQKIQPDQSYQVPTSAVLPSPTSLPSHLREKFGFSDPNANSSSFITSSSSDNMLDSSFLQGSSKAVDLSRFNQPVASEQQQQQAWKQKFMGSQSVSFGGSVLHNSPTSKDGSVENKIGRDVQNQSLFSPQVDSSSLLYNMVPNLTSNVSDGNLSTIPSGSTYLQNAMYGCLDDSSGLLQNTGENDPATRTFVKVYKSGSVGRSLDITRFSNYAELREELGQMFGIKGQLDDPDRSGWQLVFVDRENDVLLLGDDPWESFVNSVWYIKILSPEDVHKMGKQGNDPRYLS</sequence>
<gene>
    <name type="primary">ARF12</name>
    <name type="synonym">ARF8</name>
    <name type="ORF">H0624F09.13</name>
    <name type="ORF">OsI_017236</name>
</gene>
<comment type="function">
    <text>Auxin response factors (ARFs) are transcriptional factors that bind specifically to the DNA sequence 5'-TGTCTC-3' found in the auxin-responsive promoter elements (AuxREs).</text>
</comment>
<comment type="subunit">
    <text evidence="1">Homodimers and heterodimers.</text>
</comment>
<comment type="subcellular location">
    <subcellularLocation>
        <location evidence="2">Nucleus</location>
    </subcellularLocation>
</comment>
<comment type="domain">
    <text>Interactions between auxin response factors (ARFs) and Aux/IAA proteins occur through their C-terminal dimerization domains III and IV.</text>
</comment>
<comment type="similarity">
    <text evidence="5">Belongs to the ARF family.</text>
</comment>
<feature type="chain" id="PRO_0000299268" description="Auxin response factor 12">
    <location>
        <begin position="1"/>
        <end position="816"/>
    </location>
</feature>
<feature type="domain" description="PB1" evidence="3">
    <location>
        <begin position="717"/>
        <end position="801"/>
    </location>
</feature>
<feature type="DNA-binding region" description="TF-B3" evidence="2">
    <location>
        <begin position="135"/>
        <end position="237"/>
    </location>
</feature>
<feature type="region of interest" description="Disordered" evidence="4">
    <location>
        <begin position="1"/>
        <end position="24"/>
    </location>
</feature>
<feature type="region of interest" description="Disordered" evidence="4">
    <location>
        <begin position="526"/>
        <end position="565"/>
    </location>
</feature>
<feature type="compositionally biased region" description="Low complexity" evidence="4">
    <location>
        <begin position="1"/>
        <end position="10"/>
    </location>
</feature>
<feature type="compositionally biased region" description="Pro residues" evidence="4">
    <location>
        <begin position="11"/>
        <end position="20"/>
    </location>
</feature>